<feature type="chain" id="PRO_0000305297" description="Guanine nucleotide exchange factor for Rab-3A">
    <location>
        <begin position="1"/>
        <end position="377"/>
    </location>
</feature>
<feature type="region of interest" description="Disordered" evidence="3">
    <location>
        <begin position="23"/>
        <end position="57"/>
    </location>
</feature>
<feature type="region of interest" description="Disordered" evidence="3">
    <location>
        <begin position="167"/>
        <end position="198"/>
    </location>
</feature>
<feature type="coiled-coil region" evidence="2">
    <location>
        <begin position="77"/>
        <end position="128"/>
    </location>
</feature>
<feature type="modified residue" description="Phosphoserine" evidence="6">
    <location>
        <position position="169"/>
    </location>
</feature>
<feature type="modified residue" description="Phosphoserine" evidence="6">
    <location>
        <position position="180"/>
    </location>
</feature>
<reference key="1">
    <citation type="journal article" date="2001" name="Neuron">
        <title>GRAB: a physiologic guanine nucleotide exchange factor for Rab3A, which interacts with inositol hexakisphosphate kinase.</title>
        <authorList>
            <person name="Luo H.R."/>
            <person name="Saiardi A."/>
            <person name="Nagata E."/>
            <person name="Ye K."/>
            <person name="Yu H."/>
            <person name="Jung T.S."/>
            <person name="Luo X."/>
            <person name="Jain S."/>
            <person name="Sawa A."/>
            <person name="Snyder S.H."/>
        </authorList>
    </citation>
    <scope>NUCLEOTIDE SEQUENCE [MRNA]</scope>
    <scope>FUNCTION</scope>
    <scope>INTERACTION WITH IHPK1 AND RAB3A</scope>
    <scope>TISSUE SPECIFICITY</scope>
    <scope>DEVELOPMENTAL STAGE</scope>
</reference>
<reference key="2">
    <citation type="journal article" date="2012" name="Nat. Commun.">
        <title>Quantitative maps of protein phosphorylation sites across 14 different rat organs and tissues.</title>
        <authorList>
            <person name="Lundby A."/>
            <person name="Secher A."/>
            <person name="Lage K."/>
            <person name="Nordsborg N.B."/>
            <person name="Dmytriyev A."/>
            <person name="Lundby C."/>
            <person name="Olsen J.V."/>
        </authorList>
    </citation>
    <scope>PHOSPHORYLATION [LARGE SCALE ANALYSIS] AT SER-169 AND SER-180</scope>
    <scope>IDENTIFICATION BY MASS SPECTROMETRY [LARGE SCALE ANALYSIS]</scope>
</reference>
<protein>
    <recommendedName>
        <fullName>Guanine nucleotide exchange factor for Rab-3A</fullName>
    </recommendedName>
    <alternativeName>
        <fullName>Rab-3A-interacting-like protein 1</fullName>
        <shortName>Rab3A-interacting-like protein 1</shortName>
    </alternativeName>
    <alternativeName>
        <fullName>Rabin3-like 1</fullName>
    </alternativeName>
</protein>
<organism>
    <name type="scientific">Rattus norvegicus</name>
    <name type="common">Rat</name>
    <dbReference type="NCBI Taxonomy" id="10116"/>
    <lineage>
        <taxon>Eukaryota</taxon>
        <taxon>Metazoa</taxon>
        <taxon>Chordata</taxon>
        <taxon>Craniata</taxon>
        <taxon>Vertebrata</taxon>
        <taxon>Euteleostomi</taxon>
        <taxon>Mammalia</taxon>
        <taxon>Eutheria</taxon>
        <taxon>Euarchontoglires</taxon>
        <taxon>Glires</taxon>
        <taxon>Rodentia</taxon>
        <taxon>Myomorpha</taxon>
        <taxon>Muroidea</taxon>
        <taxon>Muridae</taxon>
        <taxon>Murinae</taxon>
        <taxon>Rattus</taxon>
    </lineage>
</organism>
<accession>Q99NH3</accession>
<proteinExistence type="evidence at protein level"/>
<keyword id="KW-0175">Coiled coil</keyword>
<keyword id="KW-0344">Guanine-nucleotide releasing factor</keyword>
<keyword id="KW-0597">Phosphoprotein</keyword>
<keyword id="KW-0653">Protein transport</keyword>
<keyword id="KW-1185">Reference proteome</keyword>
<keyword id="KW-0813">Transport</keyword>
<sequence length="377" mass="41908">MWSGPPQQDEGLPVGLSAISVPWKNLGPSKGNRKSPGGLVEASASWEEAGGEEHPAAAPLDVSRLRSSSMEIREKGSEFLKEELYKAQKELKLKDEECERLCKVRAQLEQELEELTASLFEEAHKMVREANMKQAASEKQLKEAWGKIDMLQAEVTALKTLVITSTPASPNRELHPQLLSPTKAGPRKGHSRQKSTSSLCPVVCPTAGHIPTPDKEGKEVDTTLFAEFQAWRASPTLDKNCPFLERVYREDVGPCLDFTVQELSALVRTAVEDNTLTIEPVASQTLPNVECNNTNTCALSGLARTCHHRIRLGDSDGHYYISPSSRARITAVCNFFTYVRYIQQGLVRQDAEPMFWEIMRLRKGMSLAKLGFFPQEA</sequence>
<gene>
    <name type="primary">Rab3il1</name>
    <name type="synonym">Grab</name>
</gene>
<comment type="function">
    <text evidence="1 4">Guanine nucleotide exchange factor (GEF) which may activate RAB3A, a GTPase that regulates synaptic vesicle exocytosis. Promotes the exchange of GDP to GTP, converting inactive GDP-bound Rab proteins into their active GTP-bound form. May also activate RAB8A and RAB8B (By similarity).</text>
</comment>
<comment type="subunit">
    <text evidence="4">Interacts with RAB3A and IHPK1 through the coiled-coil domain. This interaction is competitive. IHPK1 kinase activity is not required for this interaction.</text>
</comment>
<comment type="tissue specificity">
    <text evidence="4">Selectively localized to the brain (at protein level).</text>
</comment>
<comment type="developmental stage">
    <text evidence="4">Negligible levels at embryonic stages 9 dpc and 15 dpc. RAB3IL1 levels increase progressively at postnatal ages P3, P7 and P13 with maximal levels in adult brain.</text>
</comment>
<comment type="similarity">
    <text evidence="5">Belongs to the SEC2 family.</text>
</comment>
<dbReference type="EMBL" id="AY026049">
    <property type="protein sequence ID" value="AAK07668.1"/>
    <property type="molecule type" value="mRNA"/>
</dbReference>
<dbReference type="RefSeq" id="NP_599238.1">
    <property type="nucleotide sequence ID" value="NM_134411.2"/>
</dbReference>
<dbReference type="SMR" id="Q99NH3"/>
<dbReference type="FunCoup" id="Q99NH3">
    <property type="interactions" value="82"/>
</dbReference>
<dbReference type="STRING" id="10116.ENSRNOP00000027611"/>
<dbReference type="GlyGen" id="Q99NH3">
    <property type="glycosylation" value="1 site"/>
</dbReference>
<dbReference type="iPTMnet" id="Q99NH3"/>
<dbReference type="PhosphoSitePlus" id="Q99NH3"/>
<dbReference type="PaxDb" id="10116-ENSRNOP00000027611"/>
<dbReference type="GeneID" id="171452"/>
<dbReference type="KEGG" id="rno:171452"/>
<dbReference type="UCSC" id="RGD:619764">
    <property type="organism name" value="rat"/>
</dbReference>
<dbReference type="AGR" id="RGD:619764"/>
<dbReference type="CTD" id="5866"/>
<dbReference type="RGD" id="619764">
    <property type="gene designation" value="Rab3il1"/>
</dbReference>
<dbReference type="eggNOG" id="KOG4324">
    <property type="taxonomic scope" value="Eukaryota"/>
</dbReference>
<dbReference type="InParanoid" id="Q99NH3"/>
<dbReference type="PhylomeDB" id="Q99NH3"/>
<dbReference type="Reactome" id="R-RNO-8876198">
    <property type="pathway name" value="RAB GEFs exchange GTP for GDP on RABs"/>
</dbReference>
<dbReference type="PRO" id="PR:Q99NH3"/>
<dbReference type="Proteomes" id="UP000002494">
    <property type="component" value="Unplaced"/>
</dbReference>
<dbReference type="GO" id="GO:0005085">
    <property type="term" value="F:guanyl-nucleotide exchange factor activity"/>
    <property type="evidence" value="ECO:0000314"/>
    <property type="project" value="RGD"/>
</dbReference>
<dbReference type="GO" id="GO:0042802">
    <property type="term" value="F:identical protein binding"/>
    <property type="evidence" value="ECO:0000266"/>
    <property type="project" value="RGD"/>
</dbReference>
<dbReference type="GO" id="GO:0019900">
    <property type="term" value="F:kinase binding"/>
    <property type="evidence" value="ECO:0000314"/>
    <property type="project" value="RGD"/>
</dbReference>
<dbReference type="GO" id="GO:0015031">
    <property type="term" value="P:protein transport"/>
    <property type="evidence" value="ECO:0007669"/>
    <property type="project" value="UniProtKB-KW"/>
</dbReference>
<dbReference type="FunFam" id="1.20.5.4880:FF:000001">
    <property type="entry name" value="Guanine nucleotide exchange factor for Rab-3A"/>
    <property type="match status" value="1"/>
</dbReference>
<dbReference type="Gene3D" id="1.20.5.4880">
    <property type="match status" value="1"/>
</dbReference>
<dbReference type="InterPro" id="IPR040351">
    <property type="entry name" value="RAB3IL/RAB3IP/Sec2"/>
</dbReference>
<dbReference type="InterPro" id="IPR009449">
    <property type="entry name" value="Sec2_N"/>
</dbReference>
<dbReference type="PANTHER" id="PTHR14430:SF5">
    <property type="entry name" value="GUANINE NUCLEOTIDE EXCHANGE FACTOR FOR RAB-3A"/>
    <property type="match status" value="1"/>
</dbReference>
<dbReference type="PANTHER" id="PTHR14430">
    <property type="entry name" value="RABIN3-RELATED"/>
    <property type="match status" value="1"/>
</dbReference>
<dbReference type="Pfam" id="PF06428">
    <property type="entry name" value="Sec2p"/>
    <property type="match status" value="1"/>
</dbReference>
<dbReference type="SUPFAM" id="SSF144284">
    <property type="entry name" value="Sec2 N-terminal region"/>
    <property type="match status" value="1"/>
</dbReference>
<evidence type="ECO:0000250" key="1"/>
<evidence type="ECO:0000255" key="2"/>
<evidence type="ECO:0000256" key="3">
    <source>
        <dbReference type="SAM" id="MobiDB-lite"/>
    </source>
</evidence>
<evidence type="ECO:0000269" key="4">
    <source>
    </source>
</evidence>
<evidence type="ECO:0000305" key="5"/>
<evidence type="ECO:0007744" key="6">
    <source>
    </source>
</evidence>
<name>R3GEF_RAT</name>